<name>SAHH_NOCFA</name>
<proteinExistence type="inferred from homology"/>
<evidence type="ECO:0000255" key="1">
    <source>
        <dbReference type="HAMAP-Rule" id="MF_00563"/>
    </source>
</evidence>
<organism>
    <name type="scientific">Nocardia farcinica (strain IFM 10152)</name>
    <dbReference type="NCBI Taxonomy" id="247156"/>
    <lineage>
        <taxon>Bacteria</taxon>
        <taxon>Bacillati</taxon>
        <taxon>Actinomycetota</taxon>
        <taxon>Actinomycetes</taxon>
        <taxon>Mycobacteriales</taxon>
        <taxon>Nocardiaceae</taxon>
        <taxon>Nocardia</taxon>
    </lineage>
</organism>
<feature type="chain" id="PRO_0000116973" description="Adenosylhomocysteinase">
    <location>
        <begin position="1"/>
        <end position="494"/>
    </location>
</feature>
<feature type="binding site" evidence="1">
    <location>
        <position position="72"/>
    </location>
    <ligand>
        <name>substrate</name>
    </ligand>
</feature>
<feature type="binding site" evidence="1">
    <location>
        <position position="155"/>
    </location>
    <ligand>
        <name>substrate</name>
    </ligand>
</feature>
<feature type="binding site" evidence="1">
    <location>
        <position position="217"/>
    </location>
    <ligand>
        <name>substrate</name>
    </ligand>
</feature>
<feature type="binding site" evidence="1">
    <location>
        <begin position="218"/>
        <end position="220"/>
    </location>
    <ligand>
        <name>NAD(+)</name>
        <dbReference type="ChEBI" id="CHEBI:57540"/>
    </ligand>
</feature>
<feature type="binding site" evidence="1">
    <location>
        <position position="247"/>
    </location>
    <ligand>
        <name>substrate</name>
    </ligand>
</feature>
<feature type="binding site" evidence="1">
    <location>
        <position position="251"/>
    </location>
    <ligand>
        <name>substrate</name>
    </ligand>
</feature>
<feature type="binding site" evidence="1">
    <location>
        <position position="252"/>
    </location>
    <ligand>
        <name>NAD(+)</name>
        <dbReference type="ChEBI" id="CHEBI:57540"/>
    </ligand>
</feature>
<feature type="binding site" evidence="1">
    <location>
        <begin position="281"/>
        <end position="286"/>
    </location>
    <ligand>
        <name>NAD(+)</name>
        <dbReference type="ChEBI" id="CHEBI:57540"/>
    </ligand>
</feature>
<feature type="binding site" evidence="1">
    <location>
        <position position="304"/>
    </location>
    <ligand>
        <name>NAD(+)</name>
        <dbReference type="ChEBI" id="CHEBI:57540"/>
    </ligand>
</feature>
<feature type="binding site" evidence="1">
    <location>
        <position position="339"/>
    </location>
    <ligand>
        <name>NAD(+)</name>
        <dbReference type="ChEBI" id="CHEBI:57540"/>
    </ligand>
</feature>
<feature type="binding site" evidence="1">
    <location>
        <begin position="360"/>
        <end position="362"/>
    </location>
    <ligand>
        <name>NAD(+)</name>
        <dbReference type="ChEBI" id="CHEBI:57540"/>
    </ligand>
</feature>
<feature type="binding site" evidence="1">
    <location>
        <position position="408"/>
    </location>
    <ligand>
        <name>NAD(+)</name>
        <dbReference type="ChEBI" id="CHEBI:57540"/>
    </ligand>
</feature>
<reference key="1">
    <citation type="journal article" date="2004" name="Proc. Natl. Acad. Sci. U.S.A.">
        <title>The complete genomic sequence of Nocardia farcinica IFM 10152.</title>
        <authorList>
            <person name="Ishikawa J."/>
            <person name="Yamashita A."/>
            <person name="Mikami Y."/>
            <person name="Hoshino Y."/>
            <person name="Kurita H."/>
            <person name="Hotta K."/>
            <person name="Shiba T."/>
            <person name="Hattori M."/>
        </authorList>
    </citation>
    <scope>NUCLEOTIDE SEQUENCE [LARGE SCALE GENOMIC DNA]</scope>
    <source>
        <strain>IFM 10152</strain>
    </source>
</reference>
<comment type="function">
    <text evidence="1">May play a key role in the regulation of the intracellular concentration of adenosylhomocysteine.</text>
</comment>
<comment type="catalytic activity">
    <reaction evidence="1">
        <text>S-adenosyl-L-homocysteine + H2O = L-homocysteine + adenosine</text>
        <dbReference type="Rhea" id="RHEA:21708"/>
        <dbReference type="ChEBI" id="CHEBI:15377"/>
        <dbReference type="ChEBI" id="CHEBI:16335"/>
        <dbReference type="ChEBI" id="CHEBI:57856"/>
        <dbReference type="ChEBI" id="CHEBI:58199"/>
        <dbReference type="EC" id="3.13.2.1"/>
    </reaction>
</comment>
<comment type="cofactor">
    <cofactor evidence="1">
        <name>NAD(+)</name>
        <dbReference type="ChEBI" id="CHEBI:57540"/>
    </cofactor>
    <text evidence="1">Binds 1 NAD(+) per subunit.</text>
</comment>
<comment type="pathway">
    <text evidence="1">Amino-acid biosynthesis; L-homocysteine biosynthesis; L-homocysteine from S-adenosyl-L-homocysteine: step 1/1.</text>
</comment>
<comment type="subcellular location">
    <subcellularLocation>
        <location evidence="1">Cytoplasm</location>
    </subcellularLocation>
</comment>
<comment type="similarity">
    <text evidence="1">Belongs to the adenosylhomocysteinase family.</text>
</comment>
<keyword id="KW-0963">Cytoplasm</keyword>
<keyword id="KW-0378">Hydrolase</keyword>
<keyword id="KW-0520">NAD</keyword>
<keyword id="KW-0554">One-carbon metabolism</keyword>
<keyword id="KW-1185">Reference proteome</keyword>
<dbReference type="EC" id="3.13.2.1" evidence="1"/>
<dbReference type="EMBL" id="AP006618">
    <property type="protein sequence ID" value="BAD59464.1"/>
    <property type="molecule type" value="Genomic_DNA"/>
</dbReference>
<dbReference type="RefSeq" id="WP_011211148.1">
    <property type="nucleotide sequence ID" value="NC_006361.1"/>
</dbReference>
<dbReference type="SMR" id="Q5YQS7"/>
<dbReference type="STRING" id="247156.NFA_46130"/>
<dbReference type="GeneID" id="61135217"/>
<dbReference type="KEGG" id="nfa:NFA_46130"/>
<dbReference type="eggNOG" id="COG0499">
    <property type="taxonomic scope" value="Bacteria"/>
</dbReference>
<dbReference type="HOGENOM" id="CLU_025194_2_1_11"/>
<dbReference type="OrthoDB" id="9802717at2"/>
<dbReference type="UniPathway" id="UPA00314">
    <property type="reaction ID" value="UER00076"/>
</dbReference>
<dbReference type="Proteomes" id="UP000006820">
    <property type="component" value="Chromosome"/>
</dbReference>
<dbReference type="GO" id="GO:0005829">
    <property type="term" value="C:cytosol"/>
    <property type="evidence" value="ECO:0007669"/>
    <property type="project" value="TreeGrafter"/>
</dbReference>
<dbReference type="GO" id="GO:0004013">
    <property type="term" value="F:adenosylhomocysteinase activity"/>
    <property type="evidence" value="ECO:0007669"/>
    <property type="project" value="UniProtKB-UniRule"/>
</dbReference>
<dbReference type="GO" id="GO:0071269">
    <property type="term" value="P:L-homocysteine biosynthetic process"/>
    <property type="evidence" value="ECO:0007669"/>
    <property type="project" value="UniProtKB-UniRule"/>
</dbReference>
<dbReference type="GO" id="GO:0006730">
    <property type="term" value="P:one-carbon metabolic process"/>
    <property type="evidence" value="ECO:0007669"/>
    <property type="project" value="UniProtKB-KW"/>
</dbReference>
<dbReference type="GO" id="GO:0033353">
    <property type="term" value="P:S-adenosylmethionine cycle"/>
    <property type="evidence" value="ECO:0007669"/>
    <property type="project" value="TreeGrafter"/>
</dbReference>
<dbReference type="CDD" id="cd00401">
    <property type="entry name" value="SAHH"/>
    <property type="match status" value="1"/>
</dbReference>
<dbReference type="FunFam" id="3.40.50.720:FF:000004">
    <property type="entry name" value="Adenosylhomocysteinase"/>
    <property type="match status" value="1"/>
</dbReference>
<dbReference type="Gene3D" id="3.40.50.1480">
    <property type="entry name" value="Adenosylhomocysteinase-like"/>
    <property type="match status" value="1"/>
</dbReference>
<dbReference type="Gene3D" id="3.40.50.720">
    <property type="entry name" value="NAD(P)-binding Rossmann-like Domain"/>
    <property type="match status" value="1"/>
</dbReference>
<dbReference type="HAMAP" id="MF_00563">
    <property type="entry name" value="AdoHcyase"/>
    <property type="match status" value="1"/>
</dbReference>
<dbReference type="InterPro" id="IPR042172">
    <property type="entry name" value="Adenosylhomocyst_ase-like_sf"/>
</dbReference>
<dbReference type="InterPro" id="IPR000043">
    <property type="entry name" value="Adenosylhomocysteinase-like"/>
</dbReference>
<dbReference type="InterPro" id="IPR015878">
    <property type="entry name" value="Ado_hCys_hydrolase_NAD-bd"/>
</dbReference>
<dbReference type="InterPro" id="IPR036291">
    <property type="entry name" value="NAD(P)-bd_dom_sf"/>
</dbReference>
<dbReference type="InterPro" id="IPR020082">
    <property type="entry name" value="S-Ado-L-homoCys_hydrolase_CS"/>
</dbReference>
<dbReference type="NCBIfam" id="TIGR00936">
    <property type="entry name" value="ahcY"/>
    <property type="match status" value="1"/>
</dbReference>
<dbReference type="NCBIfam" id="NF004005">
    <property type="entry name" value="PRK05476.2-3"/>
    <property type="match status" value="1"/>
</dbReference>
<dbReference type="PANTHER" id="PTHR23420">
    <property type="entry name" value="ADENOSYLHOMOCYSTEINASE"/>
    <property type="match status" value="1"/>
</dbReference>
<dbReference type="PANTHER" id="PTHR23420:SF0">
    <property type="entry name" value="ADENOSYLHOMOCYSTEINASE"/>
    <property type="match status" value="1"/>
</dbReference>
<dbReference type="Pfam" id="PF05221">
    <property type="entry name" value="AdoHcyase"/>
    <property type="match status" value="1"/>
</dbReference>
<dbReference type="Pfam" id="PF00670">
    <property type="entry name" value="AdoHcyase_NAD"/>
    <property type="match status" value="1"/>
</dbReference>
<dbReference type="PIRSF" id="PIRSF001109">
    <property type="entry name" value="Ad_hcy_hydrolase"/>
    <property type="match status" value="1"/>
</dbReference>
<dbReference type="SMART" id="SM00996">
    <property type="entry name" value="AdoHcyase"/>
    <property type="match status" value="1"/>
</dbReference>
<dbReference type="SMART" id="SM00997">
    <property type="entry name" value="AdoHcyase_NAD"/>
    <property type="match status" value="1"/>
</dbReference>
<dbReference type="SUPFAM" id="SSF52283">
    <property type="entry name" value="Formate/glycerate dehydrogenase catalytic domain-like"/>
    <property type="match status" value="1"/>
</dbReference>
<dbReference type="SUPFAM" id="SSF51735">
    <property type="entry name" value="NAD(P)-binding Rossmann-fold domains"/>
    <property type="match status" value="1"/>
</dbReference>
<dbReference type="PROSITE" id="PS00738">
    <property type="entry name" value="ADOHCYASE_1"/>
    <property type="match status" value="1"/>
</dbReference>
<dbReference type="PROSITE" id="PS00739">
    <property type="entry name" value="ADOHCYASE_2"/>
    <property type="match status" value="1"/>
</dbReference>
<protein>
    <recommendedName>
        <fullName evidence="1">Adenosylhomocysteinase</fullName>
        <ecNumber evidence="1">3.13.2.1</ecNumber>
    </recommendedName>
    <alternativeName>
        <fullName evidence="1">S-adenosyl-L-homocysteine hydrolase</fullName>
        <shortName evidence="1">AdoHcyase</shortName>
    </alternativeName>
</protein>
<sequence>MTTSELPARTSPTPDVRNGIDYKVADLTLAEFGRKEIRLAEHEMPGLMALRREYADVQPLKGARISGSLHMTVQTAVLIETLTALGAQVRWASCNIFSTQDHAAAAVVVGPHGTVEEPKGVSVFAWKGETLEEYWWAAEQMLTWPGEPANMILDDGGDATMLVLRGAQFEKAGVVPPEDADHSAEYKVFLNLLRERFETDRGKWTAIAESVRGVTEETTTGVLRLYQFAAAGELVFPAINVNDSVTKSKFDNKYGTRHSLIDGINRGTDVLIGGKKVLICGYGDVGKGCAESLAGQGARVQVTEIDPINALQALMDGYDVVTVEQAIGEADIVITATGNKDIITLDHMKAMKDQAILGNIGHFDNEIDMAALERSGATRLTIKPQVDLWTFGESGKSIIVLSEGRLLNLGNATGHPSFVMSNSFSNQVIAQIELWTKPEEYDNEVYRLPKHLDEKVARIHVEALGGTLTKLTKDQAEYIGVDVEGPYKPEHYRY</sequence>
<gene>
    <name evidence="1" type="primary">ahcY</name>
    <name type="ordered locus">NFA_46130</name>
</gene>
<accession>Q5YQS7</accession>